<sequence length="262" mass="29206">MASLNQEQLKILEQTRQRLLHLTQSLGSLSNSINQSDPLPPWSSLQSQATIISNNLLSISHLLTEHQELLSSIVAYPTPNFPGRTESTILHQLMRTKLEPRVEEWVARGRNVARHNTASSQIRAQQGAAAEGETVRLSVDELLDLWHWAPIAANMEARRRDWGGDYTLEEKEMGVKNVITGLKRQLDEGDEEDEEEEEEEEDMQGEEMEVVVGAHTKAGGGSGVEFDIARGSSHIPSKPVAPGMPLDDIFRFMMTGAPPRPR</sequence>
<comment type="function">
    <text evidence="1">Component of the Mediator complex, a coactivator involved in the regulated transcription of nearly all RNA polymerase II-dependent genes. Mediator functions as a bridge to convey information from gene-specific regulatory proteins to the basal RNA polymerase II transcription machinery. Mediator is recruited to promoters by direct interactions with regulatory proteins and serves as a scaffold for the assembly of a functional preinitiation complex with RNA polymerase II and the general transcription factors (By similarity).</text>
</comment>
<comment type="subunit">
    <text evidence="1">Component of the Mediator complex.</text>
</comment>
<comment type="subcellular location">
    <subcellularLocation>
        <location evidence="4">Nucleus</location>
    </subcellularLocation>
</comment>
<comment type="similarity">
    <text evidence="4">Belongs to the Mediator complex subunit 8 family.</text>
</comment>
<accession>Q1DLG1</accession>
<accession>J3K1Q2</accession>
<reference key="1">
    <citation type="journal article" date="2009" name="Genome Res.">
        <title>Comparative genomic analyses of the human fungal pathogens Coccidioides and their relatives.</title>
        <authorList>
            <person name="Sharpton T.J."/>
            <person name="Stajich J.E."/>
            <person name="Rounsley S.D."/>
            <person name="Gardner M.J."/>
            <person name="Wortman J.R."/>
            <person name="Jordar V.S."/>
            <person name="Maiti R."/>
            <person name="Kodira C.D."/>
            <person name="Neafsey D.E."/>
            <person name="Zeng Q."/>
            <person name="Hung C.-Y."/>
            <person name="McMahan C."/>
            <person name="Muszewska A."/>
            <person name="Grynberg M."/>
            <person name="Mandel M.A."/>
            <person name="Kellner E.M."/>
            <person name="Barker B.M."/>
            <person name="Galgiani J.N."/>
            <person name="Orbach M.J."/>
            <person name="Kirkland T.N."/>
            <person name="Cole G.T."/>
            <person name="Henn M.R."/>
            <person name="Birren B.W."/>
            <person name="Taylor J.W."/>
        </authorList>
    </citation>
    <scope>NUCLEOTIDE SEQUENCE [LARGE SCALE GENOMIC DNA]</scope>
    <source>
        <strain>RS</strain>
    </source>
</reference>
<reference key="2">
    <citation type="journal article" date="2010" name="Genome Res.">
        <title>Population genomic sequencing of Coccidioides fungi reveals recent hybridization and transposon control.</title>
        <authorList>
            <person name="Neafsey D.E."/>
            <person name="Barker B.M."/>
            <person name="Sharpton T.J."/>
            <person name="Stajich J.E."/>
            <person name="Park D.J."/>
            <person name="Whiston E."/>
            <person name="Hung C.-Y."/>
            <person name="McMahan C."/>
            <person name="White J."/>
            <person name="Sykes S."/>
            <person name="Heiman D."/>
            <person name="Young S."/>
            <person name="Zeng Q."/>
            <person name="Abouelleil A."/>
            <person name="Aftuck L."/>
            <person name="Bessette D."/>
            <person name="Brown A."/>
            <person name="FitzGerald M."/>
            <person name="Lui A."/>
            <person name="Macdonald J.P."/>
            <person name="Priest M."/>
            <person name="Orbach M.J."/>
            <person name="Galgiani J.N."/>
            <person name="Kirkland T.N."/>
            <person name="Cole G.T."/>
            <person name="Birren B.W."/>
            <person name="Henn M.R."/>
            <person name="Taylor J.W."/>
            <person name="Rounsley S.D."/>
        </authorList>
    </citation>
    <scope>GENOME REANNOTATION</scope>
    <source>
        <strain>RS</strain>
    </source>
</reference>
<evidence type="ECO:0000250" key="1"/>
<evidence type="ECO:0000255" key="2"/>
<evidence type="ECO:0000256" key="3">
    <source>
        <dbReference type="SAM" id="MobiDB-lite"/>
    </source>
</evidence>
<evidence type="ECO:0000305" key="4"/>
<gene>
    <name type="primary">MED8</name>
    <name type="ORF">CIMG_08852</name>
</gene>
<name>MED8_COCIM</name>
<proteinExistence type="inferred from homology"/>
<keyword id="KW-0010">Activator</keyword>
<keyword id="KW-0175">Coiled coil</keyword>
<keyword id="KW-0539">Nucleus</keyword>
<keyword id="KW-1185">Reference proteome</keyword>
<keyword id="KW-0804">Transcription</keyword>
<keyword id="KW-0805">Transcription regulation</keyword>
<protein>
    <recommendedName>
        <fullName>Mediator of RNA polymerase II transcription subunit 8</fullName>
    </recommendedName>
    <alternativeName>
        <fullName>Mediator complex subunit 8</fullName>
    </alternativeName>
</protein>
<organism>
    <name type="scientific">Coccidioides immitis (strain RS)</name>
    <name type="common">Valley fever fungus</name>
    <dbReference type="NCBI Taxonomy" id="246410"/>
    <lineage>
        <taxon>Eukaryota</taxon>
        <taxon>Fungi</taxon>
        <taxon>Dikarya</taxon>
        <taxon>Ascomycota</taxon>
        <taxon>Pezizomycotina</taxon>
        <taxon>Eurotiomycetes</taxon>
        <taxon>Eurotiomycetidae</taxon>
        <taxon>Onygenales</taxon>
        <taxon>Onygenaceae</taxon>
        <taxon>Coccidioides</taxon>
    </lineage>
</organism>
<feature type="chain" id="PRO_0000304541" description="Mediator of RNA polymerase II transcription subunit 8">
    <location>
        <begin position="1"/>
        <end position="262"/>
    </location>
</feature>
<feature type="region of interest" description="Disordered" evidence="3">
    <location>
        <begin position="183"/>
        <end position="206"/>
    </location>
</feature>
<feature type="coiled-coil region" evidence="2">
    <location>
        <begin position="168"/>
        <end position="211"/>
    </location>
</feature>
<feature type="compositionally biased region" description="Acidic residues" evidence="3">
    <location>
        <begin position="188"/>
        <end position="206"/>
    </location>
</feature>
<dbReference type="EMBL" id="GG704913">
    <property type="protein sequence ID" value="EAS30106.3"/>
    <property type="molecule type" value="Genomic_DNA"/>
</dbReference>
<dbReference type="RefSeq" id="XP_001241689.1">
    <property type="nucleotide sequence ID" value="XM_001241688.2"/>
</dbReference>
<dbReference type="SMR" id="Q1DLG1"/>
<dbReference type="FunCoup" id="Q1DLG1">
    <property type="interactions" value="120"/>
</dbReference>
<dbReference type="STRING" id="246410.Q1DLG1"/>
<dbReference type="GeneID" id="4559512"/>
<dbReference type="KEGG" id="cim:CIMG_08852"/>
<dbReference type="VEuPathDB" id="FungiDB:CIMG_08852"/>
<dbReference type="InParanoid" id="Q1DLG1"/>
<dbReference type="OMA" id="WAPIEAN"/>
<dbReference type="OrthoDB" id="5329317at2759"/>
<dbReference type="Proteomes" id="UP000001261">
    <property type="component" value="Unassembled WGS sequence"/>
</dbReference>
<dbReference type="GO" id="GO:0070847">
    <property type="term" value="C:core mediator complex"/>
    <property type="evidence" value="ECO:0007669"/>
    <property type="project" value="TreeGrafter"/>
</dbReference>
<dbReference type="GO" id="GO:0016592">
    <property type="term" value="C:mediator complex"/>
    <property type="evidence" value="ECO:0007669"/>
    <property type="project" value="InterPro"/>
</dbReference>
<dbReference type="GO" id="GO:0000978">
    <property type="term" value="F:RNA polymerase II cis-regulatory region sequence-specific DNA binding"/>
    <property type="evidence" value="ECO:0007669"/>
    <property type="project" value="TreeGrafter"/>
</dbReference>
<dbReference type="GO" id="GO:0003712">
    <property type="term" value="F:transcription coregulator activity"/>
    <property type="evidence" value="ECO:0007669"/>
    <property type="project" value="InterPro"/>
</dbReference>
<dbReference type="GO" id="GO:0006357">
    <property type="term" value="P:regulation of transcription by RNA polymerase II"/>
    <property type="evidence" value="ECO:0007669"/>
    <property type="project" value="InterPro"/>
</dbReference>
<dbReference type="Gene3D" id="1.20.58.1710">
    <property type="match status" value="1"/>
</dbReference>
<dbReference type="Gene3D" id="6.10.250.2610">
    <property type="match status" value="1"/>
</dbReference>
<dbReference type="InterPro" id="IPR019364">
    <property type="entry name" value="Mediatior_Med8_fun/met"/>
</dbReference>
<dbReference type="PANTHER" id="PTHR13074">
    <property type="entry name" value="MEDIATOR OF RNA POLYMERASE II TRANSCRIPTION SUBUNIT 8"/>
    <property type="match status" value="1"/>
</dbReference>
<dbReference type="PANTHER" id="PTHR13074:SF9">
    <property type="entry name" value="MEDIATOR OF RNA POLYMERASE II TRANSCRIPTION SUBUNIT 8"/>
    <property type="match status" value="1"/>
</dbReference>
<dbReference type="Pfam" id="PF10232">
    <property type="entry name" value="Med8"/>
    <property type="match status" value="1"/>
</dbReference>